<sequence length="156" mass="17514">MTKMNVESFNLDHTKVVAPFIRLAGTMEGLNGDVIHKYDIRFKQPNKEHMDMPGLHSLEHLMAENIRNHSDKVVDLSPMGCQTGFYVSFINHDNYDDVLNIVEATLNDVLNATEVPACNEVQCGWAASHSLEGAKTIAQAFLDKRNEWHDVFGTGK</sequence>
<accession>P65329</accession>
<accession>Q99SC5</accession>
<gene>
    <name evidence="1" type="primary">luxS</name>
    <name type="ordered locus">SAV2134</name>
</gene>
<dbReference type="EC" id="4.4.1.21" evidence="1"/>
<dbReference type="EMBL" id="BA000017">
    <property type="protein sequence ID" value="BAB58296.1"/>
    <property type="molecule type" value="Genomic_DNA"/>
</dbReference>
<dbReference type="RefSeq" id="WP_000164421.1">
    <property type="nucleotide sequence ID" value="NC_002758.2"/>
</dbReference>
<dbReference type="SMR" id="P65329"/>
<dbReference type="KEGG" id="sav:SAV2134"/>
<dbReference type="HOGENOM" id="CLU_107531_2_0_9"/>
<dbReference type="PhylomeDB" id="P65329"/>
<dbReference type="Proteomes" id="UP000002481">
    <property type="component" value="Chromosome"/>
</dbReference>
<dbReference type="GO" id="GO:0005506">
    <property type="term" value="F:iron ion binding"/>
    <property type="evidence" value="ECO:0007669"/>
    <property type="project" value="InterPro"/>
</dbReference>
<dbReference type="GO" id="GO:0043768">
    <property type="term" value="F:S-ribosylhomocysteine lyase activity"/>
    <property type="evidence" value="ECO:0007669"/>
    <property type="project" value="UniProtKB-UniRule"/>
</dbReference>
<dbReference type="GO" id="GO:0009372">
    <property type="term" value="P:quorum sensing"/>
    <property type="evidence" value="ECO:0007669"/>
    <property type="project" value="UniProtKB-UniRule"/>
</dbReference>
<dbReference type="Gene3D" id="3.30.1360.80">
    <property type="entry name" value="S-ribosylhomocysteinase (LuxS)"/>
    <property type="match status" value="1"/>
</dbReference>
<dbReference type="HAMAP" id="MF_00091">
    <property type="entry name" value="LuxS"/>
    <property type="match status" value="1"/>
</dbReference>
<dbReference type="InterPro" id="IPR037005">
    <property type="entry name" value="LuxS_sf"/>
</dbReference>
<dbReference type="InterPro" id="IPR011249">
    <property type="entry name" value="Metalloenz_LuxS/M16"/>
</dbReference>
<dbReference type="InterPro" id="IPR003815">
    <property type="entry name" value="S-ribosylhomocysteinase"/>
</dbReference>
<dbReference type="NCBIfam" id="NF002604">
    <property type="entry name" value="PRK02260.1-4"/>
    <property type="match status" value="1"/>
</dbReference>
<dbReference type="PANTHER" id="PTHR35799">
    <property type="entry name" value="S-RIBOSYLHOMOCYSTEINE LYASE"/>
    <property type="match status" value="1"/>
</dbReference>
<dbReference type="PANTHER" id="PTHR35799:SF1">
    <property type="entry name" value="S-RIBOSYLHOMOCYSTEINE LYASE"/>
    <property type="match status" value="1"/>
</dbReference>
<dbReference type="Pfam" id="PF02664">
    <property type="entry name" value="LuxS"/>
    <property type="match status" value="1"/>
</dbReference>
<dbReference type="PIRSF" id="PIRSF006160">
    <property type="entry name" value="AI2"/>
    <property type="match status" value="1"/>
</dbReference>
<dbReference type="PRINTS" id="PR01487">
    <property type="entry name" value="LUXSPROTEIN"/>
</dbReference>
<dbReference type="SUPFAM" id="SSF63411">
    <property type="entry name" value="LuxS/MPP-like metallohydrolase"/>
    <property type="match status" value="1"/>
</dbReference>
<reference key="1">
    <citation type="journal article" date="2001" name="Lancet">
        <title>Whole genome sequencing of meticillin-resistant Staphylococcus aureus.</title>
        <authorList>
            <person name="Kuroda M."/>
            <person name="Ohta T."/>
            <person name="Uchiyama I."/>
            <person name="Baba T."/>
            <person name="Yuzawa H."/>
            <person name="Kobayashi I."/>
            <person name="Cui L."/>
            <person name="Oguchi A."/>
            <person name="Aoki K."/>
            <person name="Nagai Y."/>
            <person name="Lian J.-Q."/>
            <person name="Ito T."/>
            <person name="Kanamori M."/>
            <person name="Matsumaru H."/>
            <person name="Maruyama A."/>
            <person name="Murakami H."/>
            <person name="Hosoyama A."/>
            <person name="Mizutani-Ui Y."/>
            <person name="Takahashi N.K."/>
            <person name="Sawano T."/>
            <person name="Inoue R."/>
            <person name="Kaito C."/>
            <person name="Sekimizu K."/>
            <person name="Hirakawa H."/>
            <person name="Kuhara S."/>
            <person name="Goto S."/>
            <person name="Yabuzaki J."/>
            <person name="Kanehisa M."/>
            <person name="Yamashita A."/>
            <person name="Oshima K."/>
            <person name="Furuya K."/>
            <person name="Yoshino C."/>
            <person name="Shiba T."/>
            <person name="Hattori M."/>
            <person name="Ogasawara N."/>
            <person name="Hayashi H."/>
            <person name="Hiramatsu K."/>
        </authorList>
    </citation>
    <scope>NUCLEOTIDE SEQUENCE [LARGE SCALE GENOMIC DNA]</scope>
    <source>
        <strain>Mu50 / ATCC 700699</strain>
    </source>
</reference>
<protein>
    <recommendedName>
        <fullName evidence="1">S-ribosylhomocysteine lyase</fullName>
        <ecNumber evidence="1">4.4.1.21</ecNumber>
    </recommendedName>
    <alternativeName>
        <fullName evidence="1">AI-2 synthesis protein</fullName>
    </alternativeName>
    <alternativeName>
        <fullName evidence="1">Autoinducer-2 production protein LuxS</fullName>
    </alternativeName>
</protein>
<keyword id="KW-0071">Autoinducer synthesis</keyword>
<keyword id="KW-0408">Iron</keyword>
<keyword id="KW-0456">Lyase</keyword>
<keyword id="KW-0479">Metal-binding</keyword>
<keyword id="KW-0673">Quorum sensing</keyword>
<evidence type="ECO:0000255" key="1">
    <source>
        <dbReference type="HAMAP-Rule" id="MF_00091"/>
    </source>
</evidence>
<comment type="function">
    <text evidence="1">Involved in the synthesis of autoinducer 2 (AI-2) which is secreted by bacteria and is used to communicate both the cell density and the metabolic potential of the environment. The regulation of gene expression in response to changes in cell density is called quorum sensing. Catalyzes the transformation of S-ribosylhomocysteine (RHC) to homocysteine (HC) and 4,5-dihydroxy-2,3-pentadione (DPD).</text>
</comment>
<comment type="catalytic activity">
    <reaction evidence="1">
        <text>S-(5-deoxy-D-ribos-5-yl)-L-homocysteine = (S)-4,5-dihydroxypentane-2,3-dione + L-homocysteine</text>
        <dbReference type="Rhea" id="RHEA:17753"/>
        <dbReference type="ChEBI" id="CHEBI:29484"/>
        <dbReference type="ChEBI" id="CHEBI:58195"/>
        <dbReference type="ChEBI" id="CHEBI:58199"/>
        <dbReference type="EC" id="4.4.1.21"/>
    </reaction>
</comment>
<comment type="cofactor">
    <cofactor evidence="1">
        <name>Fe cation</name>
        <dbReference type="ChEBI" id="CHEBI:24875"/>
    </cofactor>
    <text evidence="1">Binds 1 Fe cation per subunit.</text>
</comment>
<comment type="subunit">
    <text evidence="1">Homodimer.</text>
</comment>
<comment type="similarity">
    <text evidence="1">Belongs to the LuxS family.</text>
</comment>
<feature type="chain" id="PRO_0000172254" description="S-ribosylhomocysteine lyase">
    <location>
        <begin position="1"/>
        <end position="156"/>
    </location>
</feature>
<feature type="binding site" evidence="1">
    <location>
        <position position="56"/>
    </location>
    <ligand>
        <name>Fe cation</name>
        <dbReference type="ChEBI" id="CHEBI:24875"/>
    </ligand>
</feature>
<feature type="binding site" evidence="1">
    <location>
        <position position="60"/>
    </location>
    <ligand>
        <name>Fe cation</name>
        <dbReference type="ChEBI" id="CHEBI:24875"/>
    </ligand>
</feature>
<feature type="binding site" evidence="1">
    <location>
        <position position="123"/>
    </location>
    <ligand>
        <name>Fe cation</name>
        <dbReference type="ChEBI" id="CHEBI:24875"/>
    </ligand>
</feature>
<organism>
    <name type="scientific">Staphylococcus aureus (strain Mu50 / ATCC 700699)</name>
    <dbReference type="NCBI Taxonomy" id="158878"/>
    <lineage>
        <taxon>Bacteria</taxon>
        <taxon>Bacillati</taxon>
        <taxon>Bacillota</taxon>
        <taxon>Bacilli</taxon>
        <taxon>Bacillales</taxon>
        <taxon>Staphylococcaceae</taxon>
        <taxon>Staphylococcus</taxon>
    </lineage>
</organism>
<proteinExistence type="inferred from homology"/>
<name>LUXS_STAAM</name>